<accession>Q9CEU5</accession>
<protein>
    <recommendedName>
        <fullName evidence="1">Small ribosomal subunit protein bS20</fullName>
    </recommendedName>
    <alternativeName>
        <fullName evidence="2">30S ribosomal protein S20</fullName>
    </alternativeName>
</protein>
<keyword id="KW-1185">Reference proteome</keyword>
<keyword id="KW-0687">Ribonucleoprotein</keyword>
<keyword id="KW-0689">Ribosomal protein</keyword>
<keyword id="KW-0694">RNA-binding</keyword>
<keyword id="KW-0699">rRNA-binding</keyword>
<comment type="function">
    <text evidence="1">Binds directly to 16S ribosomal RNA.</text>
</comment>
<comment type="similarity">
    <text evidence="1">Belongs to the bacterial ribosomal protein bS20 family.</text>
</comment>
<organism>
    <name type="scientific">Lactococcus lactis subsp. lactis (strain IL1403)</name>
    <name type="common">Streptococcus lactis</name>
    <dbReference type="NCBI Taxonomy" id="272623"/>
    <lineage>
        <taxon>Bacteria</taxon>
        <taxon>Bacillati</taxon>
        <taxon>Bacillota</taxon>
        <taxon>Bacilli</taxon>
        <taxon>Lactobacillales</taxon>
        <taxon>Streptococcaceae</taxon>
        <taxon>Lactococcus</taxon>
    </lineage>
</organism>
<proteinExistence type="inferred from homology"/>
<dbReference type="EMBL" id="AE005176">
    <property type="protein sequence ID" value="AAK05837.1"/>
    <property type="molecule type" value="Genomic_DNA"/>
</dbReference>
<dbReference type="PIR" id="C86842">
    <property type="entry name" value="C86842"/>
</dbReference>
<dbReference type="RefSeq" id="NP_267895.1">
    <property type="nucleotide sequence ID" value="NC_002662.1"/>
</dbReference>
<dbReference type="RefSeq" id="WP_010906113.1">
    <property type="nucleotide sequence ID" value="NC_002662.1"/>
</dbReference>
<dbReference type="SMR" id="Q9CEU5"/>
<dbReference type="PaxDb" id="272623-L0397"/>
<dbReference type="EnsemblBacteria" id="AAK05837">
    <property type="protein sequence ID" value="AAK05837"/>
    <property type="gene ID" value="L0397"/>
</dbReference>
<dbReference type="GeneID" id="89633940"/>
<dbReference type="KEGG" id="lla:L0397"/>
<dbReference type="PATRIC" id="fig|272623.7.peg.1864"/>
<dbReference type="eggNOG" id="COG0268">
    <property type="taxonomic scope" value="Bacteria"/>
</dbReference>
<dbReference type="HOGENOM" id="CLU_160655_1_1_9"/>
<dbReference type="OrthoDB" id="9808392at2"/>
<dbReference type="Proteomes" id="UP000002196">
    <property type="component" value="Chromosome"/>
</dbReference>
<dbReference type="GO" id="GO:0005829">
    <property type="term" value="C:cytosol"/>
    <property type="evidence" value="ECO:0007669"/>
    <property type="project" value="TreeGrafter"/>
</dbReference>
<dbReference type="GO" id="GO:0015935">
    <property type="term" value="C:small ribosomal subunit"/>
    <property type="evidence" value="ECO:0007669"/>
    <property type="project" value="TreeGrafter"/>
</dbReference>
<dbReference type="GO" id="GO:0070181">
    <property type="term" value="F:small ribosomal subunit rRNA binding"/>
    <property type="evidence" value="ECO:0007669"/>
    <property type="project" value="TreeGrafter"/>
</dbReference>
<dbReference type="GO" id="GO:0003735">
    <property type="term" value="F:structural constituent of ribosome"/>
    <property type="evidence" value="ECO:0007669"/>
    <property type="project" value="InterPro"/>
</dbReference>
<dbReference type="GO" id="GO:0006412">
    <property type="term" value="P:translation"/>
    <property type="evidence" value="ECO:0007669"/>
    <property type="project" value="UniProtKB-UniRule"/>
</dbReference>
<dbReference type="FunFam" id="1.20.58.110:FF:000001">
    <property type="entry name" value="30S ribosomal protein S20"/>
    <property type="match status" value="1"/>
</dbReference>
<dbReference type="Gene3D" id="1.20.58.110">
    <property type="entry name" value="Ribosomal protein S20"/>
    <property type="match status" value="1"/>
</dbReference>
<dbReference type="HAMAP" id="MF_00500">
    <property type="entry name" value="Ribosomal_bS20"/>
    <property type="match status" value="1"/>
</dbReference>
<dbReference type="InterPro" id="IPR002583">
    <property type="entry name" value="Ribosomal_bS20"/>
</dbReference>
<dbReference type="InterPro" id="IPR036510">
    <property type="entry name" value="Ribosomal_bS20_sf"/>
</dbReference>
<dbReference type="NCBIfam" id="TIGR00029">
    <property type="entry name" value="S20"/>
    <property type="match status" value="1"/>
</dbReference>
<dbReference type="PANTHER" id="PTHR33398">
    <property type="entry name" value="30S RIBOSOMAL PROTEIN S20"/>
    <property type="match status" value="1"/>
</dbReference>
<dbReference type="PANTHER" id="PTHR33398:SF1">
    <property type="entry name" value="SMALL RIBOSOMAL SUBUNIT PROTEIN BS20C"/>
    <property type="match status" value="1"/>
</dbReference>
<dbReference type="Pfam" id="PF01649">
    <property type="entry name" value="Ribosomal_S20p"/>
    <property type="match status" value="1"/>
</dbReference>
<dbReference type="SUPFAM" id="SSF46992">
    <property type="entry name" value="Ribosomal protein S20"/>
    <property type="match status" value="1"/>
</dbReference>
<gene>
    <name evidence="1" type="primary">rpsT</name>
    <name type="ordered locus">LL1739</name>
    <name type="ORF">L0397</name>
</gene>
<name>RS20_LACLA</name>
<sequence length="77" mass="8353">MANIKSAIKRAELNKVANERNAQQKSAMRTLIKKFEAAPTEELYRAASSSIDKAASKGLIHANKASRDKARLAAKLG</sequence>
<reference key="1">
    <citation type="journal article" date="2001" name="Genome Res.">
        <title>The complete genome sequence of the lactic acid bacterium Lactococcus lactis ssp. lactis IL1403.</title>
        <authorList>
            <person name="Bolotin A."/>
            <person name="Wincker P."/>
            <person name="Mauger S."/>
            <person name="Jaillon O."/>
            <person name="Malarme K."/>
            <person name="Weissenbach J."/>
            <person name="Ehrlich S.D."/>
            <person name="Sorokin A."/>
        </authorList>
    </citation>
    <scope>NUCLEOTIDE SEQUENCE [LARGE SCALE GENOMIC DNA]</scope>
    <source>
        <strain>IL1403</strain>
    </source>
</reference>
<evidence type="ECO:0000255" key="1">
    <source>
        <dbReference type="HAMAP-Rule" id="MF_00500"/>
    </source>
</evidence>
<evidence type="ECO:0000305" key="2"/>
<feature type="chain" id="PRO_0000167977" description="Small ribosomal subunit protein bS20">
    <location>
        <begin position="1"/>
        <end position="77"/>
    </location>
</feature>